<keyword id="KW-0489">Methyltransferase</keyword>
<keyword id="KW-0949">S-adenosyl-L-methionine</keyword>
<keyword id="KW-0808">Transferase</keyword>
<name>MENG_TRIV2</name>
<accession>Q3MD91</accession>
<proteinExistence type="inferred from homology"/>
<gene>
    <name evidence="1" type="primary">menG</name>
    <name type="ordered locus">Ava_1422</name>
</gene>
<comment type="function">
    <text evidence="1">Methyltransferase required for the conversion of 2-phytyl-1,4-beta-naphthoquinol to phylloquinol.</text>
</comment>
<comment type="catalytic activity">
    <reaction evidence="1">
        <text>demethylphylloquinol + S-adenosyl-L-methionine = phylloquinol + S-adenosyl-L-homocysteine + H(+)</text>
        <dbReference type="Rhea" id="RHEA:40551"/>
        <dbReference type="ChEBI" id="CHEBI:15378"/>
        <dbReference type="ChEBI" id="CHEBI:28433"/>
        <dbReference type="ChEBI" id="CHEBI:57856"/>
        <dbReference type="ChEBI" id="CHEBI:59789"/>
        <dbReference type="ChEBI" id="CHEBI:87844"/>
        <dbReference type="EC" id="2.1.1.329"/>
    </reaction>
</comment>
<comment type="pathway">
    <text evidence="1">Cofactor biosynthesis; phylloquinone biosynthesis.</text>
</comment>
<comment type="similarity">
    <text evidence="1">Belongs to the class I-like SAM-binding methyltransferase superfamily. MenG/UbiE family.</text>
</comment>
<evidence type="ECO:0000255" key="1">
    <source>
        <dbReference type="HAMAP-Rule" id="MF_01982"/>
    </source>
</evidence>
<sequence>MTNEIRAIFDRIAPVYDQLNDWLSLGQHRIWKEMAIKWTGAKPGDTCLDLCCGSGDLALRLARRVGSTGQVYGVDFSANLLETAKQRAQAQYPQPHISWVEANVLDLPFEDNQFDAATMGYGLRNVTDIPRSLQELRRVLKPNAKAAILDFHRPNNQQFRTFQQWYLDSIVVPLADRLGVKEEYAYISPSLDRFPIGKEQVEIALQVGFTSATHYPIANGMMGVLIISK</sequence>
<organism>
    <name type="scientific">Trichormus variabilis (strain ATCC 29413 / PCC 7937)</name>
    <name type="common">Anabaena variabilis</name>
    <dbReference type="NCBI Taxonomy" id="240292"/>
    <lineage>
        <taxon>Bacteria</taxon>
        <taxon>Bacillati</taxon>
        <taxon>Cyanobacteriota</taxon>
        <taxon>Cyanophyceae</taxon>
        <taxon>Nostocales</taxon>
        <taxon>Nostocaceae</taxon>
        <taxon>Trichormus</taxon>
    </lineage>
</organism>
<feature type="chain" id="PRO_1000056214" description="2-phytyl-1,4-naphtoquinone methyltransferase">
    <location>
        <begin position="1"/>
        <end position="229"/>
    </location>
</feature>
<protein>
    <recommendedName>
        <fullName evidence="1">2-phytyl-1,4-naphtoquinone methyltransferase</fullName>
        <ecNumber evidence="1">2.1.1.329</ecNumber>
    </recommendedName>
    <alternativeName>
        <fullName evidence="1">Demethylphylloquinone methyltransferase</fullName>
    </alternativeName>
</protein>
<reference key="1">
    <citation type="journal article" date="2014" name="Stand. Genomic Sci.">
        <title>Complete genome sequence of Anabaena variabilis ATCC 29413.</title>
        <authorList>
            <person name="Thiel T."/>
            <person name="Pratte B.S."/>
            <person name="Zhong J."/>
            <person name="Goodwin L."/>
            <person name="Copeland A."/>
            <person name="Lucas S."/>
            <person name="Han C."/>
            <person name="Pitluck S."/>
            <person name="Land M.L."/>
            <person name="Kyrpides N.C."/>
            <person name="Woyke T."/>
        </authorList>
    </citation>
    <scope>NUCLEOTIDE SEQUENCE [LARGE SCALE GENOMIC DNA]</scope>
    <source>
        <strain>ATCC 29413 / PCC 7937</strain>
    </source>
</reference>
<dbReference type="EC" id="2.1.1.329" evidence="1"/>
<dbReference type="EMBL" id="CP000117">
    <property type="protein sequence ID" value="ABA21045.1"/>
    <property type="molecule type" value="Genomic_DNA"/>
</dbReference>
<dbReference type="SMR" id="Q3MD91"/>
<dbReference type="STRING" id="240292.Ava_1422"/>
<dbReference type="KEGG" id="ava:Ava_1422"/>
<dbReference type="eggNOG" id="COG2226">
    <property type="taxonomic scope" value="Bacteria"/>
</dbReference>
<dbReference type="HOGENOM" id="CLU_037990_0_0_3"/>
<dbReference type="UniPathway" id="UPA00995"/>
<dbReference type="Proteomes" id="UP000002533">
    <property type="component" value="Chromosome"/>
</dbReference>
<dbReference type="GO" id="GO:0052624">
    <property type="term" value="F:2-phytyl-1,4-naphthoquinone methyltransferase activity"/>
    <property type="evidence" value="ECO:0007669"/>
    <property type="project" value="UniProtKB-EC"/>
</dbReference>
<dbReference type="GO" id="GO:0032259">
    <property type="term" value="P:methylation"/>
    <property type="evidence" value="ECO:0007669"/>
    <property type="project" value="UniProtKB-KW"/>
</dbReference>
<dbReference type="GO" id="GO:0042372">
    <property type="term" value="P:phylloquinone biosynthetic process"/>
    <property type="evidence" value="ECO:0007669"/>
    <property type="project" value="UniProtKB-UniRule"/>
</dbReference>
<dbReference type="CDD" id="cd02440">
    <property type="entry name" value="AdoMet_MTases"/>
    <property type="match status" value="1"/>
</dbReference>
<dbReference type="Gene3D" id="3.40.50.150">
    <property type="entry name" value="Vaccinia Virus protein VP39"/>
    <property type="match status" value="1"/>
</dbReference>
<dbReference type="HAMAP" id="MF_01982">
    <property type="entry name" value="MenG_phylloquinone_subfam"/>
    <property type="match status" value="1"/>
</dbReference>
<dbReference type="HAMAP" id="MF_01813">
    <property type="entry name" value="MenG_UbiE_methyltr"/>
    <property type="match status" value="1"/>
</dbReference>
<dbReference type="InterPro" id="IPR032904">
    <property type="entry name" value="MenG"/>
</dbReference>
<dbReference type="InterPro" id="IPR029063">
    <property type="entry name" value="SAM-dependent_MTases_sf"/>
</dbReference>
<dbReference type="InterPro" id="IPR004033">
    <property type="entry name" value="UbiE/COQ5_MeTrFase"/>
</dbReference>
<dbReference type="InterPro" id="IPR023576">
    <property type="entry name" value="UbiE/COQ5_MeTrFase_CS"/>
</dbReference>
<dbReference type="NCBIfam" id="TIGR01934">
    <property type="entry name" value="MenG_MenH_UbiE"/>
    <property type="match status" value="1"/>
</dbReference>
<dbReference type="NCBIfam" id="NF001244">
    <property type="entry name" value="PRK00216.1-5"/>
    <property type="match status" value="1"/>
</dbReference>
<dbReference type="PANTHER" id="PTHR43591:SF24">
    <property type="entry name" value="2-METHOXY-6-POLYPRENYL-1,4-BENZOQUINOL METHYLASE, MITOCHONDRIAL"/>
    <property type="match status" value="1"/>
</dbReference>
<dbReference type="PANTHER" id="PTHR43591">
    <property type="entry name" value="METHYLTRANSFERASE"/>
    <property type="match status" value="1"/>
</dbReference>
<dbReference type="Pfam" id="PF01209">
    <property type="entry name" value="Ubie_methyltran"/>
    <property type="match status" value="1"/>
</dbReference>
<dbReference type="SUPFAM" id="SSF53335">
    <property type="entry name" value="S-adenosyl-L-methionine-dependent methyltransferases"/>
    <property type="match status" value="1"/>
</dbReference>
<dbReference type="PROSITE" id="PS51608">
    <property type="entry name" value="SAM_MT_UBIE"/>
    <property type="match status" value="1"/>
</dbReference>
<dbReference type="PROSITE" id="PS01183">
    <property type="entry name" value="UBIE_1"/>
    <property type="match status" value="1"/>
</dbReference>